<protein>
    <recommendedName>
        <fullName>Insulin receptor substrate 2</fullName>
        <shortName>IRS-2</shortName>
    </recommendedName>
</protein>
<organism>
    <name type="scientific">Homo sapiens</name>
    <name type="common">Human</name>
    <dbReference type="NCBI Taxonomy" id="9606"/>
    <lineage>
        <taxon>Eukaryota</taxon>
        <taxon>Metazoa</taxon>
        <taxon>Chordata</taxon>
        <taxon>Craniata</taxon>
        <taxon>Vertebrata</taxon>
        <taxon>Euteleostomi</taxon>
        <taxon>Mammalia</taxon>
        <taxon>Eutheria</taxon>
        <taxon>Euarchontoglires</taxon>
        <taxon>Primates</taxon>
        <taxon>Haplorrhini</taxon>
        <taxon>Catarrhini</taxon>
        <taxon>Hominidae</taxon>
        <taxon>Homo</taxon>
    </lineage>
</organism>
<feature type="chain" id="PRO_0000084239" description="Insulin receptor substrate 2">
    <location>
        <begin position="1"/>
        <end position="1338"/>
    </location>
</feature>
<feature type="domain" description="PH" evidence="4">
    <location>
        <begin position="16"/>
        <end position="144"/>
    </location>
</feature>
<feature type="domain" description="IRS-type PTB" evidence="5">
    <location>
        <begin position="194"/>
        <end position="298"/>
    </location>
</feature>
<feature type="region of interest" description="Disordered" evidence="6">
    <location>
        <begin position="1"/>
        <end position="31"/>
    </location>
</feature>
<feature type="region of interest" description="Disordered" evidence="6">
    <location>
        <begin position="49"/>
        <end position="72"/>
    </location>
</feature>
<feature type="region of interest" description="Disordered" evidence="6">
    <location>
        <begin position="303"/>
        <end position="411"/>
    </location>
</feature>
<feature type="region of interest" description="Disordered" evidence="6">
    <location>
        <begin position="428"/>
        <end position="537"/>
    </location>
</feature>
<feature type="region of interest" description="Disordered" evidence="6">
    <location>
        <begin position="703"/>
        <end position="739"/>
    </location>
</feature>
<feature type="region of interest" description="Disordered" evidence="6">
    <location>
        <begin position="840"/>
        <end position="1101"/>
    </location>
</feature>
<feature type="region of interest" description="Disordered" evidence="6">
    <location>
        <begin position="1121"/>
        <end position="1296"/>
    </location>
</feature>
<feature type="short sequence motif" description="YXXM motif 1">
    <location>
        <begin position="540"/>
        <end position="543"/>
    </location>
</feature>
<feature type="short sequence motif" description="YXXM motif 2">
    <location>
        <begin position="598"/>
        <end position="601"/>
    </location>
</feature>
<feature type="short sequence motif" description="YXXM motif 3">
    <location>
        <begin position="653"/>
        <end position="656"/>
    </location>
</feature>
<feature type="short sequence motif" description="YXXM motif 4">
    <location>
        <begin position="675"/>
        <end position="678"/>
    </location>
</feature>
<feature type="short sequence motif" description="YXXM motif 5">
    <location>
        <begin position="742"/>
        <end position="745"/>
    </location>
</feature>
<feature type="short sequence motif" description="YXXM motif 6">
    <location>
        <begin position="823"/>
        <end position="826"/>
    </location>
</feature>
<feature type="short sequence motif" description="YXXM motif 7">
    <location>
        <begin position="1072"/>
        <end position="1075"/>
    </location>
</feature>
<feature type="compositionally biased region" description="Pro residues" evidence="6">
    <location>
        <begin position="1"/>
        <end position="12"/>
    </location>
</feature>
<feature type="compositionally biased region" description="Low complexity" evidence="6">
    <location>
        <begin position="19"/>
        <end position="28"/>
    </location>
</feature>
<feature type="compositionally biased region" description="Gly residues" evidence="6">
    <location>
        <begin position="53"/>
        <end position="66"/>
    </location>
</feature>
<feature type="compositionally biased region" description="Low complexity" evidence="6">
    <location>
        <begin position="444"/>
        <end position="453"/>
    </location>
</feature>
<feature type="compositionally biased region" description="Pro residues" evidence="6">
    <location>
        <begin position="459"/>
        <end position="471"/>
    </location>
</feature>
<feature type="compositionally biased region" description="Low complexity" evidence="6">
    <location>
        <begin position="475"/>
        <end position="493"/>
    </location>
</feature>
<feature type="compositionally biased region" description="Low complexity" evidence="6">
    <location>
        <begin position="703"/>
        <end position="719"/>
    </location>
</feature>
<feature type="compositionally biased region" description="Pro residues" evidence="6">
    <location>
        <begin position="859"/>
        <end position="870"/>
    </location>
</feature>
<feature type="compositionally biased region" description="Low complexity" evidence="6">
    <location>
        <begin position="938"/>
        <end position="967"/>
    </location>
</feature>
<feature type="compositionally biased region" description="Pro residues" evidence="6">
    <location>
        <begin position="1013"/>
        <end position="1022"/>
    </location>
</feature>
<feature type="compositionally biased region" description="Pro residues" evidence="6">
    <location>
        <begin position="1083"/>
        <end position="1093"/>
    </location>
</feature>
<feature type="compositionally biased region" description="Low complexity" evidence="6">
    <location>
        <begin position="1150"/>
        <end position="1165"/>
    </location>
</feature>
<feature type="compositionally biased region" description="Polar residues" evidence="6">
    <location>
        <begin position="1174"/>
        <end position="1183"/>
    </location>
</feature>
<feature type="compositionally biased region" description="Gly residues" evidence="6">
    <location>
        <begin position="1188"/>
        <end position="1198"/>
    </location>
</feature>
<feature type="compositionally biased region" description="Gly residues" evidence="6">
    <location>
        <begin position="1224"/>
        <end position="1236"/>
    </location>
</feature>
<feature type="compositionally biased region" description="Pro residues" evidence="6">
    <location>
        <begin position="1263"/>
        <end position="1277"/>
    </location>
</feature>
<feature type="modified residue" description="Phosphoserine" evidence="19 21 22 23">
    <location>
        <position position="306"/>
    </location>
</feature>
<feature type="modified residue" description="Phosphoserine" evidence="19">
    <location>
        <position position="346"/>
    </location>
</feature>
<feature type="modified residue" description="Phosphothreonine" evidence="15 19 23">
    <location>
        <position position="350"/>
    </location>
</feature>
<feature type="modified residue" description="Phosphoserine" evidence="19">
    <location>
        <position position="365"/>
    </location>
</feature>
<feature type="modified residue" description="Phosphoserine" evidence="19">
    <location>
        <position position="384"/>
    </location>
</feature>
<feature type="modified residue" description="Phosphoserine" evidence="16 17 19 21">
    <location>
        <position position="388"/>
    </location>
</feature>
<feature type="modified residue" description="Phosphoserine" evidence="16 17 19 20 21">
    <location>
        <position position="391"/>
    </location>
</feature>
<feature type="modified residue" description="Omega-N-methylarginine" evidence="24">
    <location>
        <position position="412"/>
    </location>
</feature>
<feature type="modified residue" description="Phosphothreonine" evidence="23">
    <location>
        <position position="520"/>
    </location>
</feature>
<feature type="modified residue" description="Phosphoserine" evidence="19">
    <location>
        <position position="523"/>
    </location>
</feature>
<feature type="modified residue" description="Phosphothreonine" evidence="15 19 23">
    <location>
        <position position="527"/>
    </location>
</feature>
<feature type="modified residue" description="Phosphotyrosine; by INSR" evidence="1">
    <location>
        <position position="540"/>
    </location>
</feature>
<feature type="modified residue" description="Phosphoserine; by PLK1" evidence="16 21 22 23">
    <location>
        <position position="560"/>
    </location>
</feature>
<feature type="modified residue" description="Phosphoserine" evidence="19 23">
    <location>
        <position position="577"/>
    </location>
</feature>
<feature type="modified residue" description="Phosphothreonine" evidence="19 23">
    <location>
        <position position="579"/>
    </location>
</feature>
<feature type="modified residue" description="Phosphothreonine" evidence="19">
    <location>
        <position position="580"/>
    </location>
</feature>
<feature type="modified residue" description="Phosphoserine" evidence="19 21 23 25">
    <location>
        <position position="594"/>
    </location>
</feature>
<feature type="modified residue" description="Phosphoserine" evidence="19">
    <location>
        <position position="608"/>
    </location>
</feature>
<feature type="modified residue" description="Phosphoserine" evidence="19">
    <location>
        <position position="620"/>
    </location>
</feature>
<feature type="modified residue" description="Phosphotyrosine; by INSR" evidence="3">
    <location>
        <position position="653"/>
    </location>
</feature>
<feature type="modified residue" description="Phosphotyrosine; by INSR" evidence="21 23">
    <location>
        <position position="675"/>
    </location>
</feature>
<feature type="modified residue" description="Phosphoserine" evidence="19 23">
    <location>
        <position position="679"/>
    </location>
</feature>
<feature type="modified residue" description="Phosphoserine" evidence="23">
    <location>
        <position position="682"/>
    </location>
</feature>
<feature type="modified residue" description="Phosphoserine" evidence="19">
    <location>
        <position position="735"/>
    </location>
</feature>
<feature type="modified residue" description="Phosphoserine" evidence="19 21 23">
    <location>
        <position position="736"/>
    </location>
</feature>
<feature type="modified residue" description="Phosphoserine" evidence="19">
    <location>
        <position position="770"/>
    </location>
</feature>
<feature type="modified residue" description="Phosphothreonine" evidence="19">
    <location>
        <position position="779"/>
    </location>
</feature>
<feature type="modified residue" description="Phosphoserine" evidence="23">
    <location>
        <position position="805"/>
    </location>
</feature>
<feature type="modified residue" description="Phosphoserine" evidence="19">
    <location>
        <position position="828"/>
    </location>
</feature>
<feature type="modified residue" description="Phosphoserine" evidence="17 18 19 21 22 23 25">
    <location>
        <position position="915"/>
    </location>
</feature>
<feature type="modified residue" description="Phosphotyrosine; by INSR" evidence="1">
    <location>
        <position position="919"/>
    </location>
</feature>
<feature type="modified residue" description="Phosphoserine" evidence="19 23 25">
    <location>
        <position position="973"/>
    </location>
</feature>
<feature type="modified residue" description="Phosphotyrosine; by INSR" evidence="1">
    <location>
        <position position="978"/>
    </location>
</feature>
<feature type="modified residue" description="Phosphothreonine" evidence="25">
    <location>
        <position position="1082"/>
    </location>
</feature>
<feature type="modified residue" description="Phosphoserine" evidence="19 23 25">
    <location>
        <position position="1100"/>
    </location>
</feature>
<feature type="modified residue" description="Phosphoserine; by PLK1" evidence="3">
    <location>
        <position position="1109"/>
    </location>
</feature>
<feature type="modified residue" description="Phosphothreonine" evidence="19">
    <location>
        <position position="1159"/>
    </location>
</feature>
<feature type="modified residue" description="Phosphoserine" evidence="19">
    <location>
        <position position="1162"/>
    </location>
</feature>
<feature type="modified residue" description="Phosphoserine" evidence="19 23">
    <location>
        <position position="1174"/>
    </location>
</feature>
<feature type="modified residue" description="Phosphoserine" evidence="19 21 22 23">
    <location>
        <position position="1176"/>
    </location>
</feature>
<feature type="modified residue" description="Phosphoserine" evidence="23">
    <location>
        <position position="1186"/>
    </location>
</feature>
<feature type="modified residue" description="Phosphoserine" evidence="19 23">
    <location>
        <position position="1203"/>
    </location>
</feature>
<feature type="modified residue" description="Phosphotyrosine; by INSR" evidence="1">
    <location>
        <position position="1253"/>
    </location>
</feature>
<feature type="cross-link" description="Glycyl lysine isopeptide (Lys-Gly) (interchain with G-Cter in ubiquitin)" evidence="11">
    <location>
        <position position="1331"/>
    </location>
</feature>
<feature type="sequence variant" id="VAR_033992" description="In dbSNP:rs35223808.">
    <original>H</original>
    <variation>Y</variation>
    <location>
        <position position="789"/>
    </location>
</feature>
<feature type="sequence variant" id="VAR_021557" description="In dbSNP:rs549588978." evidence="13">
    <original>G</original>
    <variation>S</variation>
    <location>
        <position position="879"/>
    </location>
</feature>
<feature type="sequence variant" id="VAR_021558" description="In dbSNP:rs201499247." evidence="13">
    <original>G</original>
    <variation>A</variation>
    <location>
        <position position="882"/>
    </location>
</feature>
<feature type="sequence variant" id="VAR_033993" description="In dbSNP:rs35927012.">
    <original>V</original>
    <variation>M</variation>
    <location>
        <position position="999"/>
    </location>
</feature>
<feature type="sequence variant" id="VAR_014857" description="In dbSNP:rs1805097." evidence="7">
    <original>G</original>
    <variation>D</variation>
    <location>
        <position position="1057"/>
    </location>
</feature>
<feature type="sequence conflict" description="In Ref. 2; AAD21531." evidence="14" ref="2">
    <original>N</original>
    <variation>NN</variation>
    <location>
        <position position="28"/>
    </location>
</feature>
<feature type="sequence conflict" description="In Ref. 2; AAD21531." evidence="14" ref="2">
    <original>KQK</original>
    <variation>NEE</variation>
    <location>
        <begin position="39"/>
        <end position="41"/>
    </location>
</feature>
<feature type="sequence conflict" description="In Ref. 1; BAA24500." evidence="14" ref="1">
    <original>E</original>
    <variation>K</variation>
    <location>
        <position position="59"/>
    </location>
</feature>
<feature type="sequence conflict" description="In Ref. 1; BAA24500." evidence="14" ref="1">
    <original>K</original>
    <variation>N</variation>
    <location>
        <position position="81"/>
    </location>
</feature>
<feature type="sequence conflict" description="In Ref. 1; BAA24500." evidence="14" ref="1">
    <original>A</original>
    <variation>P</variation>
    <location>
        <position position="107"/>
    </location>
</feature>
<feature type="sequence conflict" description="In Ref. 1; BAA24500." evidence="14" ref="1">
    <original>L</original>
    <variation>V</variation>
    <location>
        <position position="171"/>
    </location>
</feature>
<feature type="sequence conflict" description="In Ref. 2; AAD21531." evidence="14" ref="2">
    <original>A</original>
    <variation>R</variation>
    <location>
        <position position="371"/>
    </location>
</feature>
<feature type="sequence conflict" description="In Ref. 2; AAD21531." evidence="14" ref="2">
    <original>GARP</original>
    <variation>AQRL</variation>
    <location>
        <begin position="379"/>
        <end position="382"/>
    </location>
</feature>
<feature type="sequence conflict" description="In Ref. 1; BAA24500." evidence="14" ref="1">
    <original>S</original>
    <variation>I</variation>
    <location>
        <position position="406"/>
    </location>
</feature>
<feature type="sequence conflict" description="In Ref. 1; BAA24500." evidence="14" ref="1">
    <original>GGRGSKVALL</original>
    <variation>RAAGTKWHCF</variation>
    <location>
        <begin position="410"/>
        <end position="419"/>
    </location>
</feature>
<feature type="sequence conflict" description="In Ref. 1; BAA24500." evidence="14" ref="1">
    <original>A</original>
    <variation>G</variation>
    <location>
        <position position="424"/>
    </location>
</feature>
<feature type="sequence conflict" description="In Ref. 1; BAA24500." evidence="14" ref="1">
    <original>AHS</original>
    <variation>EHL</variation>
    <location>
        <begin position="436"/>
        <end position="438"/>
    </location>
</feature>
<feature type="sequence conflict" description="In Ref. 1; BAA24500." evidence="14" ref="1">
    <original>G</original>
    <variation>D</variation>
    <location>
        <position position="453"/>
    </location>
</feature>
<feature type="sequence conflict" description="In Ref. 1; BAA24500." evidence="14" ref="1">
    <original>S</original>
    <variation>W</variation>
    <location>
        <position position="456"/>
    </location>
</feature>
<feature type="sequence conflict" description="In Ref. 1; BAA24500." evidence="14" ref="1">
    <original>P</original>
    <variation>L</variation>
    <location>
        <position position="468"/>
    </location>
</feature>
<feature type="sequence conflict" description="In Ref. 2; AAD21531." evidence="14" ref="2">
    <original>L</original>
    <variation>F</variation>
    <location>
        <position position="662"/>
    </location>
</feature>
<feature type="sequence conflict" description="In Ref. 1; BAA24500." evidence="14" ref="1">
    <original>S</original>
    <variation>F</variation>
    <location>
        <position position="704"/>
    </location>
</feature>
<feature type="sequence conflict" description="In Ref. 1; BAA24500." evidence="14" ref="1">
    <original>S</original>
    <variation>F</variation>
    <location>
        <position position="714"/>
    </location>
</feature>
<feature type="sequence conflict" description="In Ref. 1; BAA24500." evidence="14" ref="1">
    <original>S</original>
    <variation>T</variation>
    <location>
        <position position="848"/>
    </location>
</feature>
<feature type="sequence conflict" description="In Ref. 2; AAD21531." evidence="14" ref="2">
    <original>P</original>
    <variation>R</variation>
    <location>
        <position position="872"/>
    </location>
</feature>
<feature type="sequence conflict" description="In Ref. 2; AAD21531." evidence="14" ref="2">
    <original>GRPE</original>
    <variation>RRS</variation>
    <location>
        <begin position="875"/>
        <end position="878"/>
    </location>
</feature>
<feature type="sequence conflict" description="In Ref. 1; BAA24500." evidence="14" ref="1">
    <original>S</original>
    <variation>L</variation>
    <location>
        <position position="956"/>
    </location>
</feature>
<feature type="sequence conflict" description="In Ref. 1; BAA24500." evidence="14" ref="1">
    <original>N</original>
    <variation>K</variation>
    <location>
        <position position="1252"/>
    </location>
</feature>
<feature type="sequence conflict" description="In Ref. 1; BAA24500." evidence="14" ref="1">
    <original>G</original>
    <variation>R</variation>
    <location>
        <position position="1303"/>
    </location>
</feature>
<feature type="sequence conflict" description="In Ref. 1; BAA24500." evidence="14" ref="1">
    <original>LPPANTYASIDFLSHHLKEATIVKE</original>
    <variation>PAPCPTTYAQH</variation>
    <location>
        <begin position="1314"/>
        <end position="1338"/>
    </location>
</feature>
<comment type="function">
    <text evidence="2 8 9 10 11 12">Signaling adapter protein that participates in the signal transduction from two prominent receptor tyrosine kinases, insulin receptor/INSR and insulin-like growth factor I receptor/IGF1R (PubMed:25879670). Plays therefore an important role in development, growth, glucose homeostasis as well as lipid metabolism (PubMed:24616100). Upon phosphorylation by the insulin receptor, functions as a signaling scaffold that propagates insulin action through binding to SH2 domain-containing proteins including the p85 regulatory subunit of PI3K, NCK1, NCK2, GRB2 or SHP2 (PubMed:15316008, PubMed:19109239). Recruitment of GRB2 leads to the activation of the guanine nucleotide exchange factor SOS1 which in turn triggers the Ras/Raf/MEK/MAPK signaling cascade (By similarity). Activation of the PI3K/AKT pathway is responsible for most of insulin metabolic effects in the cell, and the Ras/Raf/MEK/MAPK is involved in the regulation of gene expression and in cooperation with the PI3K pathway regulates cell growth and differentiation. Acts a positive regulator of the Wnt/beta-catenin signaling pathway through suppression of DVL2 autophagy-mediated degradation leading to cell proliferation (PubMed:24616100). Plays a role in cell cycle progression by promoting a robust spindle assembly checkpoint (SAC) during M-phase (PubMed:32554797). In macrophages, IL4-induced tyrosine phosphorylation of IRS2 leads to the recruitment and activation of phosphoinositide 3-kinase (PI3K) (PubMed:19109239).</text>
</comment>
<comment type="subunit">
    <text evidence="8 9 10">Interacts with PHIP. Interacts with SH2B1; this interaction enhances leptin-induced activation of the PI3-kinase pathway (PubMed:15316008). Interacts with GRB2 (PubMed:19109239). Interacts with PIK3R1 (PubMed:15316008). Interacts with DVL2; this interaction promotes the Wnt/beta-catenin signaling pathway (PubMed:24616100).</text>
</comment>
<comment type="interaction">
    <interactant intactId="EBI-1049582">
        <id>Q9Y4H2</id>
    </interactant>
    <interactant intactId="EBI-79464">
        <id>P27986</id>
        <label>PIK3R1</label>
    </interactant>
    <organismsDiffer>false</organismsDiffer>
    <experiments>3</experiments>
</comment>
<comment type="interaction">
    <interactant intactId="EBI-1049582">
        <id>Q9Y4H2</id>
    </interactant>
    <interactant intactId="EBI-476295">
        <id>P31947</id>
        <label>SFN</label>
    </interactant>
    <organismsDiffer>false</organismsDiffer>
    <experiments>4</experiments>
</comment>
<comment type="interaction">
    <interactant intactId="EBI-1049582">
        <id>Q9Y4H2</id>
    </interactant>
    <interactant intactId="EBI-1802965">
        <id>Q96EB6</id>
        <label>SIRT1</label>
    </interactant>
    <organismsDiffer>false</organismsDiffer>
    <experiments>2</experiments>
</comment>
<comment type="interaction">
    <interactant intactId="EBI-1049582">
        <id>Q9Y4H2</id>
    </interactant>
    <interactant intactId="EBI-347088">
        <id>P63104</id>
        <label>YWHAZ</label>
    </interactant>
    <organismsDiffer>false</organismsDiffer>
    <experiments>6</experiments>
</comment>
<comment type="subcellular location">
    <subcellularLocation>
        <location evidence="3">Cytoplasm</location>
        <location evidence="3">Cytosol</location>
    </subcellularLocation>
</comment>
<comment type="PTM">
    <text evidence="3 12">Phosphorylation fluctuates in a cell-cycle dependent manner with hyperphosphorylation during mitosis (PubMed:32554797). Phosphorylated at Ser-560 and Ser-1109 by PLK1; these phosphorylations prevent the activation of the PI3K pathway upon growth factor stimulation by inhibiting the binding between IRS2 and the PI3K pathway components and increasing the level of IRS2 protein degradation. In addition, they prevent premature mitotic exit (By similarity).</text>
</comment>
<comment type="PTM">
    <text evidence="11 12">Monoubiquitinated by NEDD4; leading to enhanced IGF1 signaling. During cell cycle, ubiquitination and proteasomal degradation are controlled by FZR1 (PubMed:32554797).</text>
</comment>
<proteinExistence type="evidence at protein level"/>
<keyword id="KW-0002">3D-structure</keyword>
<keyword id="KW-0963">Cytoplasm</keyword>
<keyword id="KW-1017">Isopeptide bond</keyword>
<keyword id="KW-0488">Methylation</keyword>
<keyword id="KW-0597">Phosphoprotein</keyword>
<keyword id="KW-1267">Proteomics identification</keyword>
<keyword id="KW-1185">Reference proteome</keyword>
<keyword id="KW-0807">Transducer</keyword>
<keyword id="KW-0832">Ubl conjugation</keyword>
<reference key="1">
    <citation type="journal article" date="1997" name="J. Biol. Chem.">
        <title>14-3-3 protein binds to insulin receptor substrate-1, one of the binding sites of which is in the phosphotyrosine binding domain.</title>
        <authorList>
            <person name="Ogihara T."/>
            <person name="Isobe T."/>
            <person name="Ichimura T."/>
            <person name="Taoka M."/>
            <person name="Funaki M."/>
            <person name="Sakoda H."/>
            <person name="Onishi Y."/>
            <person name="Inukai K."/>
            <person name="Anai M."/>
            <person name="Fukushima Y."/>
            <person name="Kikuchi M."/>
            <person name="Yazaki Y."/>
            <person name="Oka Y."/>
            <person name="Asano T."/>
        </authorList>
    </citation>
    <scope>NUCLEOTIDE SEQUENCE [GENOMIC DNA]</scope>
</reference>
<reference key="2">
    <citation type="journal article" date="1999" name="Mol. Endocrinol.">
        <title>Human insulin receptor substrate-2 (IRS-2) is a primary progesterone response gene.</title>
        <authorList>
            <person name="Vassen L."/>
            <person name="Wegrzyn W."/>
            <person name="Klein-Hitpass L."/>
        </authorList>
    </citation>
    <scope>NUCLEOTIDE SEQUENCE [MRNA]</scope>
</reference>
<reference key="3">
    <citation type="submission" date="2000-11" db="EMBL/GenBank/DDBJ databases">
        <title>Insulin receptor substrate 2 gene sequence.</title>
        <authorList>
            <person name="Heyne B."/>
        </authorList>
    </citation>
    <scope>NUCLEOTIDE SEQUENCE [GENOMIC DNA]</scope>
</reference>
<reference key="4">
    <citation type="journal article" date="2004" name="Nature">
        <title>The DNA sequence and analysis of human chromosome 13.</title>
        <authorList>
            <person name="Dunham A."/>
            <person name="Matthews L.H."/>
            <person name="Burton J."/>
            <person name="Ashurst J.L."/>
            <person name="Howe K.L."/>
            <person name="Ashcroft K.J."/>
            <person name="Beare D.M."/>
            <person name="Burford D.C."/>
            <person name="Hunt S.E."/>
            <person name="Griffiths-Jones S."/>
            <person name="Jones M.C."/>
            <person name="Keenan S.J."/>
            <person name="Oliver K."/>
            <person name="Scott C.E."/>
            <person name="Ainscough R."/>
            <person name="Almeida J.P."/>
            <person name="Ambrose K.D."/>
            <person name="Andrews D.T."/>
            <person name="Ashwell R.I.S."/>
            <person name="Babbage A.K."/>
            <person name="Bagguley C.L."/>
            <person name="Bailey J."/>
            <person name="Bannerjee R."/>
            <person name="Barlow K.F."/>
            <person name="Bates K."/>
            <person name="Beasley H."/>
            <person name="Bird C.P."/>
            <person name="Bray-Allen S."/>
            <person name="Brown A.J."/>
            <person name="Brown J.Y."/>
            <person name="Burrill W."/>
            <person name="Carder C."/>
            <person name="Carter N.P."/>
            <person name="Chapman J.C."/>
            <person name="Clamp M.E."/>
            <person name="Clark S.Y."/>
            <person name="Clarke G."/>
            <person name="Clee C.M."/>
            <person name="Clegg S.C."/>
            <person name="Cobley V."/>
            <person name="Collins J.E."/>
            <person name="Corby N."/>
            <person name="Coville G.J."/>
            <person name="Deloukas P."/>
            <person name="Dhami P."/>
            <person name="Dunham I."/>
            <person name="Dunn M."/>
            <person name="Earthrowl M.E."/>
            <person name="Ellington A.G."/>
            <person name="Faulkner L."/>
            <person name="Frankish A.G."/>
            <person name="Frankland J."/>
            <person name="French L."/>
            <person name="Garner P."/>
            <person name="Garnett J."/>
            <person name="Gilbert J.G.R."/>
            <person name="Gilson C.J."/>
            <person name="Ghori J."/>
            <person name="Grafham D.V."/>
            <person name="Gribble S.M."/>
            <person name="Griffiths C."/>
            <person name="Hall R.E."/>
            <person name="Hammond S."/>
            <person name="Harley J.L."/>
            <person name="Hart E.A."/>
            <person name="Heath P.D."/>
            <person name="Howden P.J."/>
            <person name="Huckle E.J."/>
            <person name="Hunt P.J."/>
            <person name="Hunt A.R."/>
            <person name="Johnson C."/>
            <person name="Johnson D."/>
            <person name="Kay M."/>
            <person name="Kimberley A.M."/>
            <person name="King A."/>
            <person name="Laird G.K."/>
            <person name="Langford C.J."/>
            <person name="Lawlor S."/>
            <person name="Leongamornlert D.A."/>
            <person name="Lloyd D.M."/>
            <person name="Lloyd C."/>
            <person name="Loveland J.E."/>
            <person name="Lovell J."/>
            <person name="Martin S."/>
            <person name="Mashreghi-Mohammadi M."/>
            <person name="McLaren S.J."/>
            <person name="McMurray A."/>
            <person name="Milne S."/>
            <person name="Moore M.J.F."/>
            <person name="Nickerson T."/>
            <person name="Palmer S.A."/>
            <person name="Pearce A.V."/>
            <person name="Peck A.I."/>
            <person name="Pelan S."/>
            <person name="Phillimore B."/>
            <person name="Porter K.M."/>
            <person name="Rice C.M."/>
            <person name="Searle S."/>
            <person name="Sehra H.K."/>
            <person name="Shownkeen R."/>
            <person name="Skuce C.D."/>
            <person name="Smith M."/>
            <person name="Steward C.A."/>
            <person name="Sycamore N."/>
            <person name="Tester J."/>
            <person name="Thomas D.W."/>
            <person name="Tracey A."/>
            <person name="Tromans A."/>
            <person name="Tubby B."/>
            <person name="Wall M."/>
            <person name="Wallis J.M."/>
            <person name="West A.P."/>
            <person name="Whitehead S.L."/>
            <person name="Willey D.L."/>
            <person name="Wilming L."/>
            <person name="Wray P.W."/>
            <person name="Wright M.W."/>
            <person name="Young L."/>
            <person name="Coulson A."/>
            <person name="Durbin R.M."/>
            <person name="Hubbard T."/>
            <person name="Sulston J.E."/>
            <person name="Beck S."/>
            <person name="Bentley D.R."/>
            <person name="Rogers J."/>
            <person name="Ross M.T."/>
        </authorList>
    </citation>
    <scope>NUCLEOTIDE SEQUENCE [LARGE SCALE GENOMIC DNA]</scope>
</reference>
<reference key="5">
    <citation type="submission" date="2000-07" db="EMBL/GenBank/DDBJ databases">
        <title>Two missense mutations in insulin receptor substrate 2 (G879S and G882A).</title>
        <authorList>
            <person name="Heyne B."/>
            <person name="Gehrisch S."/>
            <person name="Jaross W."/>
        </authorList>
    </citation>
    <scope>NUCLEOTIDE SEQUENCE OF 1-1337</scope>
    <scope>VARIANTS SER-879 AND ALA-882</scope>
</reference>
<reference key="6">
    <citation type="journal article" date="2004" name="J. Biol. Chem.">
        <title>SH2-B promotes insulin receptor substrate 1 (IRS1)- and IRS2-mediated activation of the phosphatidylinositol 3-kinase pathway in response to leptin.</title>
        <authorList>
            <person name="Duan C."/>
            <person name="Li M."/>
            <person name="Rui L."/>
        </authorList>
    </citation>
    <scope>FUNCTION</scope>
    <scope>INTERACTION WITH SH2B1</scope>
</reference>
<reference key="7">
    <citation type="journal article" date="2006" name="Cell">
        <title>Global, in vivo, and site-specific phosphorylation dynamics in signaling networks.</title>
        <authorList>
            <person name="Olsen J.V."/>
            <person name="Blagoev B."/>
            <person name="Gnad F."/>
            <person name="Macek B."/>
            <person name="Kumar C."/>
            <person name="Mortensen P."/>
            <person name="Mann M."/>
        </authorList>
    </citation>
    <scope>PHOSPHORYLATION [LARGE SCALE ANALYSIS] AT SER-388; SER-391 AND SER-560</scope>
    <scope>IDENTIFICATION BY MASS SPECTROMETRY [LARGE SCALE ANALYSIS]</scope>
    <source>
        <tissue>Cervix carcinoma</tissue>
    </source>
</reference>
<reference key="8">
    <citation type="journal article" date="2006" name="Nat. Biotechnol.">
        <title>A probability-based approach for high-throughput protein phosphorylation analysis and site localization.</title>
        <authorList>
            <person name="Beausoleil S.A."/>
            <person name="Villen J."/>
            <person name="Gerber S.A."/>
            <person name="Rush J."/>
            <person name="Gygi S.P."/>
        </authorList>
    </citation>
    <scope>PHOSPHORYLATION [LARGE SCALE ANALYSIS] AT THR-350 AND THR-527</scope>
    <scope>IDENTIFICATION BY MASS SPECTROMETRY [LARGE SCALE ANALYSIS]</scope>
    <source>
        <tissue>Cervix carcinoma</tissue>
    </source>
</reference>
<reference key="9">
    <citation type="journal article" date="2008" name="J. Proteome Res.">
        <title>Combining protein-based IMAC, peptide-based IMAC, and MudPIT for efficient phosphoproteomic analysis.</title>
        <authorList>
            <person name="Cantin G.T."/>
            <person name="Yi W."/>
            <person name="Lu B."/>
            <person name="Park S.K."/>
            <person name="Xu T."/>
            <person name="Lee J.-D."/>
            <person name="Yates J.R. III"/>
        </authorList>
    </citation>
    <scope>PHOSPHORYLATION [LARGE SCALE ANALYSIS] AT SER-915</scope>
    <scope>IDENTIFICATION BY MASS SPECTROMETRY [LARGE SCALE ANALYSIS]</scope>
    <source>
        <tissue>Cervix carcinoma</tissue>
    </source>
</reference>
<reference key="10">
    <citation type="journal article" date="2008" name="J. Proteome Res.">
        <title>Phosphoproteome of resting human platelets.</title>
        <authorList>
            <person name="Zahedi R.P."/>
            <person name="Lewandrowski U."/>
            <person name="Wiesner J."/>
            <person name="Wortelkamp S."/>
            <person name="Moebius J."/>
            <person name="Schuetz C."/>
            <person name="Walter U."/>
            <person name="Gambaryan S."/>
            <person name="Sickmann A."/>
        </authorList>
    </citation>
    <scope>PHOSPHORYLATION [LARGE SCALE ANALYSIS] AT SER-388; SER-391 AND SER-915</scope>
    <scope>IDENTIFICATION BY MASS SPECTROMETRY [LARGE SCALE ANALYSIS]</scope>
    <source>
        <tissue>Platelet</tissue>
    </source>
</reference>
<reference key="11">
    <citation type="journal article" date="2008" name="Proc. Natl. Acad. Sci. U.S.A.">
        <title>A quantitative atlas of mitotic phosphorylation.</title>
        <authorList>
            <person name="Dephoure N."/>
            <person name="Zhou C."/>
            <person name="Villen J."/>
            <person name="Beausoleil S.A."/>
            <person name="Bakalarski C.E."/>
            <person name="Elledge S.J."/>
            <person name="Gygi S.P."/>
        </authorList>
    </citation>
    <scope>PHOSPHORYLATION [LARGE SCALE ANALYSIS] AT SER-306; SER-346; THR-350; SER-365; SER-384; SER-388; SER-391; SER-523; THR-527; SER-577; THR-579; THR-580; SER-594; SER-608; SER-620; SER-679; SER-735; SER-736; SER-770; THR-779; SER-828; SER-915; SER-973; SER-1100; THR-1159; SER-1162; SER-1174; SER-1176 AND SER-1203</scope>
    <scope>IDENTIFICATION BY MASS SPECTROMETRY [LARGE SCALE ANALYSIS]</scope>
    <source>
        <tissue>Cervix carcinoma</tissue>
    </source>
</reference>
<reference key="12">
    <citation type="journal article" date="2008" name="Sci. Signal.">
        <title>Type I IL-4Rs selectively activate IRS-2 to induce target gene expression in macrophages.</title>
        <authorList>
            <person name="Heller N.M."/>
            <person name="Qi X."/>
            <person name="Junttila I.S."/>
            <person name="Shirey K.A."/>
            <person name="Vogel S.N."/>
            <person name="Paul W.E."/>
            <person name="Keegan A.D."/>
        </authorList>
    </citation>
    <scope>FUNCTION</scope>
    <scope>PHOSPHORYLATION</scope>
    <scope>INTERACTION WITH GRB2 AND PIK3R1</scope>
</reference>
<reference key="13">
    <citation type="journal article" date="2009" name="Anal. Chem.">
        <title>Lys-N and trypsin cover complementary parts of the phosphoproteome in a refined SCX-based approach.</title>
        <authorList>
            <person name="Gauci S."/>
            <person name="Helbig A.O."/>
            <person name="Slijper M."/>
            <person name="Krijgsveld J."/>
            <person name="Heck A.J."/>
            <person name="Mohammed S."/>
        </authorList>
    </citation>
    <scope>IDENTIFICATION BY MASS SPECTROMETRY [LARGE SCALE ANALYSIS]</scope>
</reference>
<reference key="14">
    <citation type="journal article" date="2009" name="Mol. Cell. Proteomics">
        <title>Large-scale proteomics analysis of the human kinome.</title>
        <authorList>
            <person name="Oppermann F.S."/>
            <person name="Gnad F."/>
            <person name="Olsen J.V."/>
            <person name="Hornberger R."/>
            <person name="Greff Z."/>
            <person name="Keri G."/>
            <person name="Mann M."/>
            <person name="Daub H."/>
        </authorList>
    </citation>
    <scope>PHOSPHORYLATION [LARGE SCALE ANALYSIS] AT SER-391</scope>
    <scope>IDENTIFICATION BY MASS SPECTROMETRY [LARGE SCALE ANALYSIS]</scope>
</reference>
<reference key="15">
    <citation type="journal article" date="2010" name="Sci. Signal.">
        <title>Quantitative phosphoproteomics reveals widespread full phosphorylation site occupancy during mitosis.</title>
        <authorList>
            <person name="Olsen J.V."/>
            <person name="Vermeulen M."/>
            <person name="Santamaria A."/>
            <person name="Kumar C."/>
            <person name="Miller M.L."/>
            <person name="Jensen L.J."/>
            <person name="Gnad F."/>
            <person name="Cox J."/>
            <person name="Jensen T.S."/>
            <person name="Nigg E.A."/>
            <person name="Brunak S."/>
            <person name="Mann M."/>
        </authorList>
    </citation>
    <scope>PHOSPHORYLATION [LARGE SCALE ANALYSIS] AT SER-306; SER-388; SER-391; SER-560; SER-594; TYR-675; SER-736; SER-915 AND SER-1176</scope>
    <scope>IDENTIFICATION BY MASS SPECTROMETRY [LARGE SCALE ANALYSIS]</scope>
    <source>
        <tissue>Cervix carcinoma</tissue>
    </source>
</reference>
<reference key="16">
    <citation type="journal article" date="2011" name="BMC Syst. Biol.">
        <title>Initial characterization of the human central proteome.</title>
        <authorList>
            <person name="Burkard T.R."/>
            <person name="Planyavsky M."/>
            <person name="Kaupe I."/>
            <person name="Breitwieser F.P."/>
            <person name="Buerckstuemmer T."/>
            <person name="Bennett K.L."/>
            <person name="Superti-Furga G."/>
            <person name="Colinge J."/>
        </authorList>
    </citation>
    <scope>IDENTIFICATION BY MASS SPECTROMETRY [LARGE SCALE ANALYSIS]</scope>
</reference>
<reference key="17">
    <citation type="journal article" date="2011" name="Sci. Signal.">
        <title>System-wide temporal characterization of the proteome and phosphoproteome of human embryonic stem cell differentiation.</title>
        <authorList>
            <person name="Rigbolt K.T."/>
            <person name="Prokhorova T.A."/>
            <person name="Akimov V."/>
            <person name="Henningsen J."/>
            <person name="Johansen P.T."/>
            <person name="Kratchmarova I."/>
            <person name="Kassem M."/>
            <person name="Mann M."/>
            <person name="Olsen J.V."/>
            <person name="Blagoev B."/>
        </authorList>
    </citation>
    <scope>PHOSPHORYLATION [LARGE SCALE ANALYSIS] AT SER-306; SER-560; SER-915 AND SER-1176</scope>
    <scope>IDENTIFICATION BY MASS SPECTROMETRY [LARGE SCALE ANALYSIS]</scope>
</reference>
<reference key="18">
    <citation type="journal article" date="2013" name="J. Proteome Res.">
        <title>Toward a comprehensive characterization of a human cancer cell phosphoproteome.</title>
        <authorList>
            <person name="Zhou H."/>
            <person name="Di Palma S."/>
            <person name="Preisinger C."/>
            <person name="Peng M."/>
            <person name="Polat A.N."/>
            <person name="Heck A.J."/>
            <person name="Mohammed S."/>
        </authorList>
    </citation>
    <scope>PHOSPHORYLATION [LARGE SCALE ANALYSIS] AT SER-306; THR-350; THR-520; THR-527; SER-560; SER-577; THR-579; SER-594; TYR-675; SER-679; SER-682; SER-736; SER-805; SER-915; SER-973; SER-1100; SER-1174; SER-1176; SER-1186 AND SER-1203</scope>
    <scope>IDENTIFICATION BY MASS SPECTROMETRY [LARGE SCALE ANALYSIS]</scope>
    <source>
        <tissue>Cervix carcinoma</tissue>
        <tissue>Erythroleukemia</tissue>
    </source>
</reference>
<reference key="19">
    <citation type="journal article" date="2014" name="J. Proteomics">
        <title>An enzyme assisted RP-RPLC approach for in-depth analysis of human liver phosphoproteome.</title>
        <authorList>
            <person name="Bian Y."/>
            <person name="Song C."/>
            <person name="Cheng K."/>
            <person name="Dong M."/>
            <person name="Wang F."/>
            <person name="Huang J."/>
            <person name="Sun D."/>
            <person name="Wang L."/>
            <person name="Ye M."/>
            <person name="Zou H."/>
        </authorList>
    </citation>
    <scope>PHOSPHORYLATION [LARGE SCALE ANALYSIS] AT SER-594; SER-915; SER-973; THR-1082 AND SER-1100</scope>
    <scope>IDENTIFICATION BY MASS SPECTROMETRY [LARGE SCALE ANALYSIS]</scope>
    <source>
        <tissue>Liver</tissue>
    </source>
</reference>
<reference key="20">
    <citation type="journal article" date="2014" name="Mol. Cell. Proteomics">
        <title>Immunoaffinity enrichment and mass spectrometry analysis of protein methylation.</title>
        <authorList>
            <person name="Guo A."/>
            <person name="Gu H."/>
            <person name="Zhou J."/>
            <person name="Mulhern D."/>
            <person name="Wang Y."/>
            <person name="Lee K.A."/>
            <person name="Yang V."/>
            <person name="Aguiar M."/>
            <person name="Kornhauser J."/>
            <person name="Jia X."/>
            <person name="Ren J."/>
            <person name="Beausoleil S.A."/>
            <person name="Silva J.C."/>
            <person name="Vemulapalli V."/>
            <person name="Bedford M.T."/>
            <person name="Comb M.J."/>
        </authorList>
    </citation>
    <scope>METHYLATION [LARGE SCALE ANALYSIS] AT ARG-412</scope>
    <scope>IDENTIFICATION BY MASS SPECTROMETRY [LARGE SCALE ANALYSIS]</scope>
    <source>
        <tissue>Colon carcinoma</tissue>
    </source>
</reference>
<reference key="21">
    <citation type="journal article" date="2014" name="J. Biol. Chem.">
        <title>Insulin receptor substrate 1/2 (IRS1/2) regulates Wnt/beta-catenin signaling through blocking autophagic degradation of dishevelled2.</title>
        <authorList>
            <person name="Geng Y."/>
            <person name="Ju Y."/>
            <person name="Ren F."/>
            <person name="Qiu Y."/>
            <person name="Tomita Y."/>
            <person name="Tomoeda M."/>
            <person name="Kishida M."/>
            <person name="Wang Y."/>
            <person name="Jin L."/>
            <person name="Su F."/>
            <person name="Wei C."/>
            <person name="Jia B."/>
            <person name="Li Y."/>
            <person name="Chang Z."/>
        </authorList>
    </citation>
    <scope>FUNCTION</scope>
    <scope>SUBCELLULAR LOCATION</scope>
    <scope>INTERACTION WITH DVL2</scope>
</reference>
<reference key="22">
    <citation type="journal article" date="2015" name="Nat. Commun.">
        <title>Nedd4-induced monoubiquitination of IRS-2 enhances IGF signalling and mitogenic activity.</title>
        <authorList>
            <person name="Fukushima T."/>
            <person name="Yoshihara H."/>
            <person name="Furuta H."/>
            <person name="Kamei H."/>
            <person name="Hakuno F."/>
            <person name="Luan J."/>
            <person name="Duan C."/>
            <person name="Saeki Y."/>
            <person name="Tanaka K."/>
            <person name="Iemura S."/>
            <person name="Natsume T."/>
            <person name="Chida K."/>
            <person name="Nakatsu Y."/>
            <person name="Kamata H."/>
            <person name="Asano T."/>
            <person name="Takahashi S."/>
        </authorList>
    </citation>
    <scope>FUNCTION</scope>
    <scope>UBIQUITINATION AT LYS-1331</scope>
    <scope>MUTAGENESIS OF LYS-1331</scope>
</reference>
<reference key="23">
    <citation type="journal article" date="2020" name="Mol. Cell. Proteomics">
        <title>The Insulin Receptor Adaptor IRS2 is an APC/C Substrate That Promotes Cell Cycle Protein Expression and a Robust Spindle Assembly Checkpoint.</title>
        <authorList>
            <person name="Manohar S."/>
            <person name="Yu Q."/>
            <person name="Gygi S.P."/>
            <person name="King R.W."/>
        </authorList>
    </citation>
    <scope>FUNCTION</scope>
    <scope>UBIQUITINATION</scope>
    <scope>PHOSPHORYLATION</scope>
</reference>
<reference key="24">
    <citation type="journal article" date="2003" name="Hum. Genet.">
        <title>Complex haplotypes of IRS2 gene are associated with severe obesity and reveal heterogeneity in the effect of Gly1057Asp mutation.</title>
        <authorList>
            <person name="Lautier C."/>
            <person name="El Mkadem S.A."/>
            <person name="Renard E."/>
            <person name="Brun J.F."/>
            <person name="Gris J.-C."/>
            <person name="Bringer J."/>
            <person name="Grigorescu F."/>
        </authorList>
    </citation>
    <scope>VARIANT ASP-1057</scope>
</reference>
<gene>
    <name type="primary">IRS2</name>
</gene>
<sequence length="1338" mass="137334">MASPPRHGPPGPASGDGPNLNNNNNNNNHSVRKCGYLRKQKHGHKRFFVLRGPGAGGDEATAGGGSAPQPPRLEYYESEKKWRSKAGAPKRVIALDCCLNINKRADAKHKYLIALYTKDEYFAVAAENEQEQEGWYRALTDLVSEGRAAAGDAPPAAAPAASCSASLPGALGGSAGAAGAEDSYGLVAPATAAYREVWQVNLKPKGLGQSKNLTGVYRLCLSARTIGFVKLNCEQPSVTLQLMNIRRCGHSDSFFFIEVGRSAVTGPGELWMQADDSVVAQNIHETILEAMKALKELFEFRPRSKSQSSGSSATHPISVPGARRHHHLVNLPPSQTGLVRRSRTDSLAATPPAAKCSSCRVRTASEGDGGAAAGAAAAGARPVSVAGSPLSPGPVRAPLSRSHTLSGGCGGRGSKVALLPAGGALQHSRSMSMPVAHSPPAATSPGSLSSSSGHGSGSYPPPPGPHPPLPHPLHHGPGQRPSSGSASASGSPSDPGFMSLDEYGSSPGDLRAFCSHRSNTPESIAETPPARDGGGGGEFYGYMTMDRPLSHCGRSYRRVSGDAAQDLDRGLRKRTYSLTTPARQRPVPQPSSASLDEYTLMRATFSGSAGRLCPSCPASSPKVAYHPYPEDYGDIEIGSHRSSSSNLGADDGYMPMTPGAALAGSGSGSCRSDDYMPMSPASVSAPKQILQPRAAAAAAAAVPSAGPAGPAPTSAAGRTFPASGGGYKASSPAESSPEDSGYMRMWCGSKLSMEHADGKLLPNGDYLNVSPSDAVTTGTPPDFFSAALHPGGEPLRGVPGCCYSSLPRSYKAPYTCGGDSDQYVLMSSPVGRILEEERLEPQATPGPSQAASAFGAGPTQPPHPVVPSPVRPSGGRPEGFLGQRGRAVRPTRLSLEGLPSLPSMHEYPLPPEPKSPGEYINIDFGEPGARLSPPAPPLLASAASSSSLLSASSPASSLGSGTPGTSSDSRQRSPLSDYMNLDFSSPKSPKPGAPSGHPVGSLDGLLSPEASSPYPPLPPRPSASPSSSLQPPPPPPAPGELYRLPPASAVATAQGPGAASSLSSDTGDNGDYTEMAFGVAATPPQPIAAPPKPEAARVASPTSGVKRLSLMEQVSGVEAFLQASQPPDPHRGAKVIRADPQGGRRRHSSETFSSTTTVTPVSPSFAHNPKRHNSASVENVSLRKSSEGGVGVGPGGGDEPPTSPRQLQPAPPLAPQGRPWTPGQPGGLVGCPGSGGSPMRRETSAGFQNGLNYIAIDVREEPGLPPQPQPPPPPLPQPGDKSSWGRTRSLGGLISAVGVGSTGGGCGGPGPGALPPANTYASIDFLSHHLKEATIVKE</sequence>
<name>IRS2_HUMAN</name>
<dbReference type="EMBL" id="AB000732">
    <property type="protein sequence ID" value="BAA24500.1"/>
    <property type="molecule type" value="Genomic_DNA"/>
</dbReference>
<dbReference type="EMBL" id="AF073310">
    <property type="protein sequence ID" value="AAD21531.1"/>
    <property type="molecule type" value="mRNA"/>
</dbReference>
<dbReference type="EMBL" id="AF322115">
    <property type="protein sequence ID" value="AAG50013.1"/>
    <property type="molecule type" value="Genomic_DNA"/>
</dbReference>
<dbReference type="EMBL" id="AF322114">
    <property type="protein sequence ID" value="AAG50013.1"/>
    <property type="status" value="JOINED"/>
    <property type="molecule type" value="Genomic_DNA"/>
</dbReference>
<dbReference type="EMBL" id="AL162497">
    <property type="status" value="NOT_ANNOTATED_CDS"/>
    <property type="molecule type" value="Genomic_DNA"/>
</dbReference>
<dbReference type="EMBL" id="AF288517">
    <property type="protein sequence ID" value="AAK83053.1"/>
    <property type="molecule type" value="Genomic_DNA"/>
</dbReference>
<dbReference type="CCDS" id="CCDS9510.1"/>
<dbReference type="RefSeq" id="NP_003740.2">
    <property type="nucleotide sequence ID" value="NM_003749.2"/>
</dbReference>
<dbReference type="PDB" id="3FQW">
    <property type="method" value="X-ray"/>
    <property type="resolution" value="1.93 A"/>
    <property type="chains" value="C=1097-1105"/>
</dbReference>
<dbReference type="PDB" id="3FQX">
    <property type="method" value="X-ray"/>
    <property type="resolution" value="1.70 A"/>
    <property type="chains" value="C=1097-1105"/>
</dbReference>
<dbReference type="PDBsum" id="3FQW"/>
<dbReference type="PDBsum" id="3FQX"/>
<dbReference type="SMR" id="Q9Y4H2"/>
<dbReference type="BioGRID" id="114209">
    <property type="interactions" value="82"/>
</dbReference>
<dbReference type="ELM" id="Q9Y4H2"/>
<dbReference type="FunCoup" id="Q9Y4H2">
    <property type="interactions" value="1310"/>
</dbReference>
<dbReference type="IntAct" id="Q9Y4H2">
    <property type="interactions" value="24"/>
</dbReference>
<dbReference type="MINT" id="Q9Y4H2"/>
<dbReference type="STRING" id="9606.ENSP00000365016"/>
<dbReference type="DrugBank" id="DB17490">
    <property type="generic name" value="NT-219"/>
</dbReference>
<dbReference type="GlyCosmos" id="Q9Y4H2">
    <property type="glycosylation" value="1 site, 1 glycan"/>
</dbReference>
<dbReference type="GlyGen" id="Q9Y4H2">
    <property type="glycosylation" value="13 sites, 1 O-linked glycan (9 sites)"/>
</dbReference>
<dbReference type="iPTMnet" id="Q9Y4H2"/>
<dbReference type="PhosphoSitePlus" id="Q9Y4H2"/>
<dbReference type="BioMuta" id="IRS2"/>
<dbReference type="DMDM" id="62298062"/>
<dbReference type="jPOST" id="Q9Y4H2"/>
<dbReference type="MassIVE" id="Q9Y4H2"/>
<dbReference type="PaxDb" id="9606-ENSP00000365016"/>
<dbReference type="PeptideAtlas" id="Q9Y4H2"/>
<dbReference type="ProteomicsDB" id="86205"/>
<dbReference type="Pumba" id="Q9Y4H2"/>
<dbReference type="Antibodypedia" id="25473">
    <property type="antibodies" value="350 antibodies from 37 providers"/>
</dbReference>
<dbReference type="DNASU" id="8660"/>
<dbReference type="Ensembl" id="ENST00000375856.5">
    <property type="protein sequence ID" value="ENSP00000365016.3"/>
    <property type="gene ID" value="ENSG00000185950.9"/>
</dbReference>
<dbReference type="GeneID" id="8660"/>
<dbReference type="KEGG" id="hsa:8660"/>
<dbReference type="MANE-Select" id="ENST00000375856.5">
    <property type="protein sequence ID" value="ENSP00000365016.3"/>
    <property type="RefSeq nucleotide sequence ID" value="NM_003749.3"/>
    <property type="RefSeq protein sequence ID" value="NP_003740.2"/>
</dbReference>
<dbReference type="UCSC" id="uc001vqv.4">
    <property type="organism name" value="human"/>
</dbReference>
<dbReference type="AGR" id="HGNC:6126"/>
<dbReference type="CTD" id="8660"/>
<dbReference type="DisGeNET" id="8660"/>
<dbReference type="GeneCards" id="IRS2"/>
<dbReference type="HGNC" id="HGNC:6126">
    <property type="gene designation" value="IRS2"/>
</dbReference>
<dbReference type="HPA" id="ENSG00000185950">
    <property type="expression patterns" value="Tissue enhanced (bone)"/>
</dbReference>
<dbReference type="MalaCards" id="IRS2"/>
<dbReference type="MIM" id="600797">
    <property type="type" value="gene"/>
</dbReference>
<dbReference type="neXtProt" id="NX_Q9Y4H2"/>
<dbReference type="OpenTargets" id="ENSG00000185950"/>
<dbReference type="PharmGKB" id="PA375"/>
<dbReference type="VEuPathDB" id="HostDB:ENSG00000185950"/>
<dbReference type="eggNOG" id="ENOG502QUNU">
    <property type="taxonomic scope" value="Eukaryota"/>
</dbReference>
<dbReference type="GeneTree" id="ENSGT00940000161407"/>
<dbReference type="HOGENOM" id="CLU_004902_1_0_1"/>
<dbReference type="InParanoid" id="Q9Y4H2"/>
<dbReference type="OMA" id="CHRKRTY"/>
<dbReference type="OrthoDB" id="946068at2759"/>
<dbReference type="PAN-GO" id="Q9Y4H2">
    <property type="GO annotations" value="5 GO annotations based on evolutionary models"/>
</dbReference>
<dbReference type="PhylomeDB" id="Q9Y4H2"/>
<dbReference type="TreeFam" id="TF325994"/>
<dbReference type="PathwayCommons" id="Q9Y4H2"/>
<dbReference type="Reactome" id="R-HSA-109704">
    <property type="pathway name" value="PI3K Cascade"/>
</dbReference>
<dbReference type="Reactome" id="R-HSA-112399">
    <property type="pathway name" value="IRS-mediated signalling"/>
</dbReference>
<dbReference type="Reactome" id="R-HSA-112412">
    <property type="pathway name" value="SOS-mediated signalling"/>
</dbReference>
<dbReference type="Reactome" id="R-HSA-1257604">
    <property type="pathway name" value="PIP3 activates AKT signaling"/>
</dbReference>
<dbReference type="Reactome" id="R-HSA-1266695">
    <property type="pathway name" value="Interleukin-7 signaling"/>
</dbReference>
<dbReference type="Reactome" id="R-HSA-198203">
    <property type="pathway name" value="PI3K/AKT activation"/>
</dbReference>
<dbReference type="Reactome" id="R-HSA-2219530">
    <property type="pathway name" value="Constitutive Signaling by Aberrant PI3K in Cancer"/>
</dbReference>
<dbReference type="Reactome" id="R-HSA-2428928">
    <property type="pathway name" value="IRS-related events triggered by IGF1R"/>
</dbReference>
<dbReference type="Reactome" id="R-HSA-2586552">
    <property type="pathway name" value="Signaling by Leptin"/>
</dbReference>
<dbReference type="Reactome" id="R-HSA-5673001">
    <property type="pathway name" value="RAF/MAP kinase cascade"/>
</dbReference>
<dbReference type="Reactome" id="R-HSA-6811558">
    <property type="pathway name" value="PI5P, PP2A and IER3 Regulate PI3K/AKT Signaling"/>
</dbReference>
<dbReference type="Reactome" id="R-HSA-74713">
    <property type="pathway name" value="IRS activation"/>
</dbReference>
<dbReference type="Reactome" id="R-HSA-74749">
    <property type="pathway name" value="Signal attenuation"/>
</dbReference>
<dbReference type="Reactome" id="R-HSA-8853659">
    <property type="pathway name" value="RET signaling"/>
</dbReference>
<dbReference type="Reactome" id="R-HSA-9006335">
    <property type="pathway name" value="Signaling by Erythropoietin"/>
</dbReference>
<dbReference type="Reactome" id="R-HSA-9027276">
    <property type="pathway name" value="Erythropoietin activates Phosphoinositide-3-kinase (PI3K)"/>
</dbReference>
<dbReference type="Reactome" id="R-HSA-9027277">
    <property type="pathway name" value="Erythropoietin activates Phospholipase C gamma (PLCG)"/>
</dbReference>
<dbReference type="Reactome" id="R-HSA-9027283">
    <property type="pathway name" value="Erythropoietin activates STAT5"/>
</dbReference>
<dbReference type="Reactome" id="R-HSA-9027284">
    <property type="pathway name" value="Erythropoietin activates RAS"/>
</dbReference>
<dbReference type="Reactome" id="R-HSA-982772">
    <property type="pathway name" value="Growth hormone receptor signaling"/>
</dbReference>
<dbReference type="SignaLink" id="Q9Y4H2"/>
<dbReference type="SIGNOR" id="Q9Y4H2"/>
<dbReference type="BioGRID-ORCS" id="8660">
    <property type="hits" value="172 hits in 1176 CRISPR screens"/>
</dbReference>
<dbReference type="ChiTaRS" id="IRS2">
    <property type="organism name" value="human"/>
</dbReference>
<dbReference type="EvolutionaryTrace" id="Q9Y4H2"/>
<dbReference type="GeneWiki" id="IRS2"/>
<dbReference type="GenomeRNAi" id="8660"/>
<dbReference type="Pharos" id="Q9Y4H2">
    <property type="development level" value="Tbio"/>
</dbReference>
<dbReference type="PRO" id="PR:Q9Y4H2"/>
<dbReference type="Proteomes" id="UP000005640">
    <property type="component" value="Chromosome 13"/>
</dbReference>
<dbReference type="RNAct" id="Q9Y4H2">
    <property type="molecule type" value="protein"/>
</dbReference>
<dbReference type="Bgee" id="ENSG00000185950">
    <property type="expression patterns" value="Expressed in decidua and 207 other cell types or tissues"/>
</dbReference>
<dbReference type="GO" id="GO:0005737">
    <property type="term" value="C:cytoplasm"/>
    <property type="evidence" value="ECO:0000314"/>
    <property type="project" value="UniProt"/>
</dbReference>
<dbReference type="GO" id="GO:0005829">
    <property type="term" value="C:cytosol"/>
    <property type="evidence" value="ECO:0000318"/>
    <property type="project" value="GO_Central"/>
</dbReference>
<dbReference type="GO" id="GO:0005886">
    <property type="term" value="C:plasma membrane"/>
    <property type="evidence" value="ECO:0000318"/>
    <property type="project" value="GO_Central"/>
</dbReference>
<dbReference type="GO" id="GO:0071889">
    <property type="term" value="F:14-3-3 protein binding"/>
    <property type="evidence" value="ECO:0007669"/>
    <property type="project" value="Ensembl"/>
</dbReference>
<dbReference type="GO" id="GO:0005158">
    <property type="term" value="F:insulin receptor binding"/>
    <property type="evidence" value="ECO:0000318"/>
    <property type="project" value="GO_Central"/>
</dbReference>
<dbReference type="GO" id="GO:0141038">
    <property type="term" value="F:phosphatidylinositol 3-kinase activator activity"/>
    <property type="evidence" value="ECO:0007669"/>
    <property type="project" value="Ensembl"/>
</dbReference>
<dbReference type="GO" id="GO:0043548">
    <property type="term" value="F:phosphatidylinositol 3-kinase binding"/>
    <property type="evidence" value="ECO:0000318"/>
    <property type="project" value="GO_Central"/>
</dbReference>
<dbReference type="GO" id="GO:0019904">
    <property type="term" value="F:protein domain specific binding"/>
    <property type="evidence" value="ECO:0007669"/>
    <property type="project" value="Ensembl"/>
</dbReference>
<dbReference type="GO" id="GO:0019903">
    <property type="term" value="F:protein phosphatase binding"/>
    <property type="evidence" value="ECO:0007669"/>
    <property type="project" value="Ensembl"/>
</dbReference>
<dbReference type="GO" id="GO:0035591">
    <property type="term" value="F:signaling adaptor activity"/>
    <property type="evidence" value="ECO:0000314"/>
    <property type="project" value="UniProt"/>
</dbReference>
<dbReference type="GO" id="GO:0005068">
    <property type="term" value="F:transmembrane receptor protein tyrosine kinase adaptor activity"/>
    <property type="evidence" value="ECO:0007669"/>
    <property type="project" value="Ensembl"/>
</dbReference>
<dbReference type="GO" id="GO:0007420">
    <property type="term" value="P:brain development"/>
    <property type="evidence" value="ECO:0007669"/>
    <property type="project" value="Ensembl"/>
</dbReference>
<dbReference type="GO" id="GO:0071333">
    <property type="term" value="P:cellular response to glucose stimulus"/>
    <property type="evidence" value="ECO:0007669"/>
    <property type="project" value="Ensembl"/>
</dbReference>
<dbReference type="GO" id="GO:0032869">
    <property type="term" value="P:cellular response to insulin stimulus"/>
    <property type="evidence" value="ECO:0000315"/>
    <property type="project" value="BHF-UCL"/>
</dbReference>
<dbReference type="GO" id="GO:1901653">
    <property type="term" value="P:cellular response to peptide"/>
    <property type="evidence" value="ECO:0007669"/>
    <property type="project" value="Ensembl"/>
</dbReference>
<dbReference type="GO" id="GO:0010631">
    <property type="term" value="P:epithelial cell migration"/>
    <property type="evidence" value="ECO:0007669"/>
    <property type="project" value="Ensembl"/>
</dbReference>
<dbReference type="GO" id="GO:0006006">
    <property type="term" value="P:glucose metabolic process"/>
    <property type="evidence" value="ECO:0000304"/>
    <property type="project" value="ProtInc"/>
</dbReference>
<dbReference type="GO" id="GO:0008286">
    <property type="term" value="P:insulin receptor signaling pathway"/>
    <property type="evidence" value="ECO:0000250"/>
    <property type="project" value="BHF-UCL"/>
</dbReference>
<dbReference type="GO" id="GO:0048009">
    <property type="term" value="P:insulin-like growth factor receptor signaling pathway"/>
    <property type="evidence" value="ECO:0000314"/>
    <property type="project" value="UniProt"/>
</dbReference>
<dbReference type="GO" id="GO:0055088">
    <property type="term" value="P:lipid homeostasis"/>
    <property type="evidence" value="ECO:0000304"/>
    <property type="project" value="BHF-UCL"/>
</dbReference>
<dbReference type="GO" id="GO:0030879">
    <property type="term" value="P:mammary gland development"/>
    <property type="evidence" value="ECO:0007669"/>
    <property type="project" value="Ensembl"/>
</dbReference>
<dbReference type="GO" id="GO:0002903">
    <property type="term" value="P:negative regulation of B cell apoptotic process"/>
    <property type="evidence" value="ECO:0000250"/>
    <property type="project" value="BHF-UCL"/>
</dbReference>
<dbReference type="GO" id="GO:0010748">
    <property type="term" value="P:negative regulation of long-chain fatty acid import across plasma membrane"/>
    <property type="evidence" value="ECO:0000315"/>
    <property type="project" value="BHF-UCL"/>
</dbReference>
<dbReference type="GO" id="GO:0030890">
    <property type="term" value="P:positive regulation of B cell proliferation"/>
    <property type="evidence" value="ECO:0000250"/>
    <property type="project" value="BHF-UCL"/>
</dbReference>
<dbReference type="GO" id="GO:0008284">
    <property type="term" value="P:positive regulation of cell population proliferation"/>
    <property type="evidence" value="ECO:0000303"/>
    <property type="project" value="BHF-UCL"/>
</dbReference>
<dbReference type="GO" id="GO:0046326">
    <property type="term" value="P:positive regulation of D-glucose import"/>
    <property type="evidence" value="ECO:0000315"/>
    <property type="project" value="BHF-UCL"/>
</dbReference>
<dbReference type="GO" id="GO:0010634">
    <property type="term" value="P:positive regulation of epithelial cell migration"/>
    <property type="evidence" value="ECO:0007669"/>
    <property type="project" value="Ensembl"/>
</dbReference>
<dbReference type="GO" id="GO:0032000">
    <property type="term" value="P:positive regulation of fatty acid beta-oxidation"/>
    <property type="evidence" value="ECO:0000315"/>
    <property type="project" value="BHF-UCL"/>
</dbReference>
<dbReference type="GO" id="GO:0010907">
    <property type="term" value="P:positive regulation of glucose metabolic process"/>
    <property type="evidence" value="ECO:0000315"/>
    <property type="project" value="BHF-UCL"/>
</dbReference>
<dbReference type="GO" id="GO:0045725">
    <property type="term" value="P:positive regulation of glycogen biosynthetic process"/>
    <property type="evidence" value="ECO:0000315"/>
    <property type="project" value="BHF-UCL"/>
</dbReference>
<dbReference type="GO" id="GO:0032024">
    <property type="term" value="P:positive regulation of insulin secretion"/>
    <property type="evidence" value="ECO:0000250"/>
    <property type="project" value="BHF-UCL"/>
</dbReference>
<dbReference type="GO" id="GO:0002053">
    <property type="term" value="P:positive regulation of mesenchymal cell proliferation"/>
    <property type="evidence" value="ECO:0007669"/>
    <property type="project" value="Ensembl"/>
</dbReference>
<dbReference type="GO" id="GO:0051897">
    <property type="term" value="P:positive regulation of phosphatidylinositol 3-kinase/protein kinase B signal transduction"/>
    <property type="evidence" value="ECO:0007669"/>
    <property type="project" value="Ensembl"/>
</dbReference>
<dbReference type="GO" id="GO:1904692">
    <property type="term" value="P:positive regulation of type B pancreatic cell proliferation"/>
    <property type="evidence" value="ECO:0007669"/>
    <property type="project" value="Ensembl"/>
</dbReference>
<dbReference type="GO" id="GO:0019216">
    <property type="term" value="P:regulation of lipid metabolic process"/>
    <property type="evidence" value="ECO:0000304"/>
    <property type="project" value="BHF-UCL"/>
</dbReference>
<dbReference type="GO" id="GO:0009749">
    <property type="term" value="P:response to glucose"/>
    <property type="evidence" value="ECO:0000250"/>
    <property type="project" value="BHF-UCL"/>
</dbReference>
<dbReference type="GO" id="GO:0007165">
    <property type="term" value="P:signal transduction"/>
    <property type="evidence" value="ECO:0000304"/>
    <property type="project" value="ProtInc"/>
</dbReference>
<dbReference type="GO" id="GO:0044342">
    <property type="term" value="P:type B pancreatic cell proliferation"/>
    <property type="evidence" value="ECO:0007669"/>
    <property type="project" value="Ensembl"/>
</dbReference>
<dbReference type="CDD" id="cd01257">
    <property type="entry name" value="PH_IRS"/>
    <property type="match status" value="1"/>
</dbReference>
<dbReference type="CDD" id="cd01204">
    <property type="entry name" value="PTB_IRS"/>
    <property type="match status" value="1"/>
</dbReference>
<dbReference type="FunFam" id="2.30.29.30:FF:000029">
    <property type="entry name" value="Insulin receptor substrate 1"/>
    <property type="match status" value="1"/>
</dbReference>
<dbReference type="FunFam" id="2.30.29.30:FF:000291">
    <property type="entry name" value="insulin receptor substrate 2"/>
    <property type="match status" value="1"/>
</dbReference>
<dbReference type="Gene3D" id="2.30.29.30">
    <property type="entry name" value="Pleckstrin-homology domain (PH domain)/Phosphotyrosine-binding domain (PTB)"/>
    <property type="match status" value="2"/>
</dbReference>
<dbReference type="InterPro" id="IPR039011">
    <property type="entry name" value="IRS"/>
</dbReference>
<dbReference type="InterPro" id="IPR002404">
    <property type="entry name" value="IRS_PTB"/>
</dbReference>
<dbReference type="InterPro" id="IPR011993">
    <property type="entry name" value="PH-like_dom_sf"/>
</dbReference>
<dbReference type="InterPro" id="IPR001849">
    <property type="entry name" value="PH_domain"/>
</dbReference>
<dbReference type="PANTHER" id="PTHR10614">
    <property type="entry name" value="INSULIN RECEPTOR SUBSTRATE"/>
    <property type="match status" value="1"/>
</dbReference>
<dbReference type="PANTHER" id="PTHR10614:SF7">
    <property type="entry name" value="INSULIN RECEPTOR SUBSTRATE 2"/>
    <property type="match status" value="1"/>
</dbReference>
<dbReference type="Pfam" id="PF02174">
    <property type="entry name" value="IRS"/>
    <property type="match status" value="1"/>
</dbReference>
<dbReference type="Pfam" id="PF00169">
    <property type="entry name" value="PH"/>
    <property type="match status" value="1"/>
</dbReference>
<dbReference type="PRINTS" id="PR00628">
    <property type="entry name" value="INSULINRSI"/>
</dbReference>
<dbReference type="SMART" id="SM01244">
    <property type="entry name" value="IRS"/>
    <property type="match status" value="1"/>
</dbReference>
<dbReference type="SMART" id="SM00233">
    <property type="entry name" value="PH"/>
    <property type="match status" value="1"/>
</dbReference>
<dbReference type="SMART" id="SM00310">
    <property type="entry name" value="PTBI"/>
    <property type="match status" value="1"/>
</dbReference>
<dbReference type="SUPFAM" id="SSF50729">
    <property type="entry name" value="PH domain-like"/>
    <property type="match status" value="2"/>
</dbReference>
<dbReference type="PROSITE" id="PS51064">
    <property type="entry name" value="IRS_PTB"/>
    <property type="match status" value="1"/>
</dbReference>
<dbReference type="PROSITE" id="PS50003">
    <property type="entry name" value="PH_DOMAIN"/>
    <property type="match status" value="1"/>
</dbReference>
<evidence type="ECO:0000250" key="1"/>
<evidence type="ECO:0000250" key="2">
    <source>
        <dbReference type="UniProtKB" id="P35570"/>
    </source>
</evidence>
<evidence type="ECO:0000250" key="3">
    <source>
        <dbReference type="UniProtKB" id="P81122"/>
    </source>
</evidence>
<evidence type="ECO:0000255" key="4">
    <source>
        <dbReference type="PROSITE-ProRule" id="PRU00145"/>
    </source>
</evidence>
<evidence type="ECO:0000255" key="5">
    <source>
        <dbReference type="PROSITE-ProRule" id="PRU00389"/>
    </source>
</evidence>
<evidence type="ECO:0000256" key="6">
    <source>
        <dbReference type="SAM" id="MobiDB-lite"/>
    </source>
</evidence>
<evidence type="ECO:0000269" key="7">
    <source>
    </source>
</evidence>
<evidence type="ECO:0000269" key="8">
    <source>
    </source>
</evidence>
<evidence type="ECO:0000269" key="9">
    <source>
    </source>
</evidence>
<evidence type="ECO:0000269" key="10">
    <source>
    </source>
</evidence>
<evidence type="ECO:0000269" key="11">
    <source>
    </source>
</evidence>
<evidence type="ECO:0000269" key="12">
    <source>
    </source>
</evidence>
<evidence type="ECO:0000269" key="13">
    <source ref="5"/>
</evidence>
<evidence type="ECO:0000305" key="14"/>
<evidence type="ECO:0007744" key="15">
    <source>
    </source>
</evidence>
<evidence type="ECO:0007744" key="16">
    <source>
    </source>
</evidence>
<evidence type="ECO:0007744" key="17">
    <source>
    </source>
</evidence>
<evidence type="ECO:0007744" key="18">
    <source>
    </source>
</evidence>
<evidence type="ECO:0007744" key="19">
    <source>
    </source>
</evidence>
<evidence type="ECO:0007744" key="20">
    <source>
    </source>
</evidence>
<evidence type="ECO:0007744" key="21">
    <source>
    </source>
</evidence>
<evidence type="ECO:0007744" key="22">
    <source>
    </source>
</evidence>
<evidence type="ECO:0007744" key="23">
    <source>
    </source>
</evidence>
<evidence type="ECO:0007744" key="24">
    <source>
    </source>
</evidence>
<evidence type="ECO:0007744" key="25">
    <source>
    </source>
</evidence>
<accession>Q9Y4H2</accession>
<accession>Q96RR2</accession>
<accession>Q9BZG0</accession>
<accession>Q9Y6I5</accession>